<feature type="chain" id="PRO_0000394291" description="DNA-directed RNA polymerases I, II, and III subunit RPABC1">
    <location>
        <begin position="1"/>
        <end position="211"/>
    </location>
</feature>
<keyword id="KW-0240">DNA-directed RNA polymerase</keyword>
<keyword id="KW-0539">Nucleus</keyword>
<keyword id="KW-1185">Reference proteome</keyword>
<keyword id="KW-0804">Transcription</keyword>
<name>RPAB1_CAEBR</name>
<organism>
    <name type="scientific">Caenorhabditis briggsae</name>
    <dbReference type="NCBI Taxonomy" id="6238"/>
    <lineage>
        <taxon>Eukaryota</taxon>
        <taxon>Metazoa</taxon>
        <taxon>Ecdysozoa</taxon>
        <taxon>Nematoda</taxon>
        <taxon>Chromadorea</taxon>
        <taxon>Rhabditida</taxon>
        <taxon>Rhabditina</taxon>
        <taxon>Rhabditomorpha</taxon>
        <taxon>Rhabditoidea</taxon>
        <taxon>Rhabditidae</taxon>
        <taxon>Peloderinae</taxon>
        <taxon>Caenorhabditis</taxon>
    </lineage>
</organism>
<comment type="function">
    <text evidence="1">DNA-dependent RNA polymerase catalyzes the transcription of DNA into RNA using the four ribonucleoside triphosphates as substrates. Common component of RNA polymerases I, II and III which synthesize ribosomal RNA precursors, mRNA precursors and many functional non-coding RNAs, and small RNAs, such as 5S rRNA and tRNAs, respectively. Pol II is the central component of the basal RNA polymerase II transcription machinery. Pols are composed of mobile elements that move relative to each other. In Pol II, RPB5 is part of the lower jaw surrounding the central large cleft and thought to grab the incoming DNA template. Seems to be the major component in this process (By similarity).</text>
</comment>
<comment type="subunit">
    <text evidence="1">Component of the RNA polymerase I (Pol I), RNA polymerase II (Pol II) and RNA polymerase III (Pol III) complexes consisting of at least 13, 12 and 17 subunits, respectively. In RNA Pol II, this subunit is present in 2-fold molar excess over the other subunits (By similarity).</text>
</comment>
<comment type="subcellular location">
    <subcellularLocation>
        <location evidence="1">Nucleus</location>
    </subcellularLocation>
</comment>
<comment type="similarity">
    <text evidence="3">Belongs to the archaeal Rpo5/eukaryotic RPB5 RNA polymerase subunit family.</text>
</comment>
<dbReference type="EMBL" id="HE600940">
    <property type="protein sequence ID" value="CAP31677.1"/>
    <property type="molecule type" value="Genomic_DNA"/>
</dbReference>
<dbReference type="SMR" id="A8XGH1"/>
<dbReference type="FunCoup" id="A8XGH1">
    <property type="interactions" value="2623"/>
</dbReference>
<dbReference type="STRING" id="6238.A8XGH1"/>
<dbReference type="EnsemblMetazoa" id="CBG12745.1">
    <property type="protein sequence ID" value="CBG12745.1"/>
    <property type="gene ID" value="WBGene00033647"/>
</dbReference>
<dbReference type="KEGG" id="cbr:CBG_12745"/>
<dbReference type="CTD" id="8582226"/>
<dbReference type="WormBase" id="CBG12745">
    <property type="protein sequence ID" value="CBP03121"/>
    <property type="gene ID" value="WBGene00033647"/>
    <property type="gene designation" value="Cbr-rpb-5"/>
</dbReference>
<dbReference type="eggNOG" id="KOG3218">
    <property type="taxonomic scope" value="Eukaryota"/>
</dbReference>
<dbReference type="HOGENOM" id="CLU_058320_0_1_1"/>
<dbReference type="InParanoid" id="A8XGH1"/>
<dbReference type="OMA" id="VRDRGYF"/>
<dbReference type="OrthoDB" id="248779at2759"/>
<dbReference type="Proteomes" id="UP000008549">
    <property type="component" value="Unassembled WGS sequence"/>
</dbReference>
<dbReference type="GO" id="GO:0005736">
    <property type="term" value="C:RNA polymerase I complex"/>
    <property type="evidence" value="ECO:0000318"/>
    <property type="project" value="GO_Central"/>
</dbReference>
<dbReference type="GO" id="GO:0005665">
    <property type="term" value="C:RNA polymerase II, core complex"/>
    <property type="evidence" value="ECO:0000318"/>
    <property type="project" value="GO_Central"/>
</dbReference>
<dbReference type="GO" id="GO:0005666">
    <property type="term" value="C:RNA polymerase III complex"/>
    <property type="evidence" value="ECO:0000318"/>
    <property type="project" value="GO_Central"/>
</dbReference>
<dbReference type="GO" id="GO:0003677">
    <property type="term" value="F:DNA binding"/>
    <property type="evidence" value="ECO:0007669"/>
    <property type="project" value="InterPro"/>
</dbReference>
<dbReference type="GO" id="GO:0003899">
    <property type="term" value="F:DNA-directed RNA polymerase activity"/>
    <property type="evidence" value="ECO:0007669"/>
    <property type="project" value="InterPro"/>
</dbReference>
<dbReference type="GO" id="GO:0006366">
    <property type="term" value="P:transcription by RNA polymerase II"/>
    <property type="evidence" value="ECO:0000318"/>
    <property type="project" value="GO_Central"/>
</dbReference>
<dbReference type="GO" id="GO:0006362">
    <property type="term" value="P:transcription elongation by RNA polymerase I"/>
    <property type="evidence" value="ECO:0000318"/>
    <property type="project" value="GO_Central"/>
</dbReference>
<dbReference type="GO" id="GO:0042797">
    <property type="term" value="P:tRNA transcription by RNA polymerase III"/>
    <property type="evidence" value="ECO:0000318"/>
    <property type="project" value="GO_Central"/>
</dbReference>
<dbReference type="FunFam" id="3.40.1340.10:FF:000001">
    <property type="entry name" value="DNA-directed RNA polymerases I, II, and III subunit RPABC1"/>
    <property type="match status" value="1"/>
</dbReference>
<dbReference type="FunFam" id="3.90.940.20:FF:000001">
    <property type="entry name" value="DNA-directed RNA polymerases I, II, and III subunit RPABC1"/>
    <property type="match status" value="1"/>
</dbReference>
<dbReference type="Gene3D" id="3.40.1340.10">
    <property type="entry name" value="RNA polymerase, Rpb5, N-terminal domain"/>
    <property type="match status" value="1"/>
</dbReference>
<dbReference type="Gene3D" id="3.90.940.20">
    <property type="entry name" value="RPB5-like RNA polymerase subunit"/>
    <property type="match status" value="1"/>
</dbReference>
<dbReference type="HAMAP" id="MF_00025">
    <property type="entry name" value="RNApol_Rpo5_RPB5"/>
    <property type="match status" value="1"/>
</dbReference>
<dbReference type="InterPro" id="IPR014381">
    <property type="entry name" value="Arch_Rpo5/euc_Rpb5"/>
</dbReference>
<dbReference type="InterPro" id="IPR005571">
    <property type="entry name" value="RNA_pol_Rpb5_N"/>
</dbReference>
<dbReference type="InterPro" id="IPR036710">
    <property type="entry name" value="RNA_pol_Rpb5_N_sf"/>
</dbReference>
<dbReference type="InterPro" id="IPR000783">
    <property type="entry name" value="RNA_pol_subH/Rpb5_C"/>
</dbReference>
<dbReference type="InterPro" id="IPR020608">
    <property type="entry name" value="RNA_pol_subH/Rpb5_CS"/>
</dbReference>
<dbReference type="InterPro" id="IPR035913">
    <property type="entry name" value="RPB5-like_sf"/>
</dbReference>
<dbReference type="NCBIfam" id="NF007129">
    <property type="entry name" value="PRK09570.1"/>
    <property type="match status" value="1"/>
</dbReference>
<dbReference type="PANTHER" id="PTHR10535">
    <property type="entry name" value="DNA-DIRECTED RNA POLYMERASES I, II, AND III SUBUNIT RPABC1"/>
    <property type="match status" value="1"/>
</dbReference>
<dbReference type="PANTHER" id="PTHR10535:SF0">
    <property type="entry name" value="DNA-DIRECTED RNA POLYMERASES I, II, AND III SUBUNIT RPABC1"/>
    <property type="match status" value="1"/>
</dbReference>
<dbReference type="Pfam" id="PF01191">
    <property type="entry name" value="RNA_pol_Rpb5_C"/>
    <property type="match status" value="1"/>
</dbReference>
<dbReference type="Pfam" id="PF03871">
    <property type="entry name" value="RNA_pol_Rpb5_N"/>
    <property type="match status" value="1"/>
</dbReference>
<dbReference type="PIRSF" id="PIRSF000747">
    <property type="entry name" value="RPB5"/>
    <property type="match status" value="1"/>
</dbReference>
<dbReference type="SUPFAM" id="SSF53036">
    <property type="entry name" value="Eukaryotic RPB5 N-terminal domain"/>
    <property type="match status" value="1"/>
</dbReference>
<dbReference type="SUPFAM" id="SSF55287">
    <property type="entry name" value="RPB5-like RNA polymerase subunit"/>
    <property type="match status" value="1"/>
</dbReference>
<dbReference type="PROSITE" id="PS01110">
    <property type="entry name" value="RNA_POL_H_23KD"/>
    <property type="match status" value="1"/>
</dbReference>
<protein>
    <recommendedName>
        <fullName evidence="2">DNA-directed RNA polymerases I, II, and III subunit RPABC1</fullName>
        <shortName evidence="2">RNA polymerases I, II, and III subunit ABC1</shortName>
    </recommendedName>
    <alternativeName>
        <fullName evidence="2">RPB5 homolog</fullName>
    </alternativeName>
</protein>
<accession>A8XGH1</accession>
<reference evidence="4" key="1">
    <citation type="journal article" date="2003" name="PLoS Biol.">
        <title>The genome sequence of Caenorhabditis briggsae: a platform for comparative genomics.</title>
        <authorList>
            <person name="Stein L.D."/>
            <person name="Bao Z."/>
            <person name="Blasiar D."/>
            <person name="Blumenthal T."/>
            <person name="Brent M.R."/>
            <person name="Chen N."/>
            <person name="Chinwalla A."/>
            <person name="Clarke L."/>
            <person name="Clee C."/>
            <person name="Coghlan A."/>
            <person name="Coulson A."/>
            <person name="D'Eustachio P."/>
            <person name="Fitch D.H.A."/>
            <person name="Fulton L.A."/>
            <person name="Fulton R.E."/>
            <person name="Griffiths-Jones S."/>
            <person name="Harris T.W."/>
            <person name="Hillier L.W."/>
            <person name="Kamath R."/>
            <person name="Kuwabara P.E."/>
            <person name="Mardis E.R."/>
            <person name="Marra M.A."/>
            <person name="Miner T.L."/>
            <person name="Minx P."/>
            <person name="Mullikin J.C."/>
            <person name="Plumb R.W."/>
            <person name="Rogers J."/>
            <person name="Schein J.E."/>
            <person name="Sohrmann M."/>
            <person name="Spieth J."/>
            <person name="Stajich J.E."/>
            <person name="Wei C."/>
            <person name="Willey D."/>
            <person name="Wilson R.K."/>
            <person name="Durbin R.M."/>
            <person name="Waterston R.H."/>
        </authorList>
    </citation>
    <scope>NUCLEOTIDE SEQUENCE [LARGE SCALE GENOMIC DNA]</scope>
    <source>
        <strain>AF16</strain>
    </source>
</reference>
<gene>
    <name evidence="4" type="primary">rpb-5</name>
    <name type="ORF">CBG12745</name>
</gene>
<proteinExistence type="inferred from homology"/>
<evidence type="ECO:0000250" key="1">
    <source>
        <dbReference type="UniProtKB" id="B0BNE2"/>
    </source>
</evidence>
<evidence type="ECO:0000250" key="2">
    <source>
        <dbReference type="UniProtKB" id="Q9N5K2"/>
    </source>
</evidence>
<evidence type="ECO:0000305" key="3"/>
<evidence type="ECO:0000312" key="4">
    <source>
        <dbReference type="EMBL" id="CAP31677.1"/>
    </source>
</evidence>
<sequence>MADDELETYRLWRIRKTVLQMVHDRGYLVAQEELDQPLETFKETFGDRPSEKKPARSDLTILVAHNDDPADQMFVFFPEDTKIGIKTIKAICQQMQEQNISRAIIVVQTGMTPSAKQSIGDMAPKYMLEHFLEAELMVNITEHELVPEHVVMTAEEKAELLARYKLKDSQLPRIQQCDPVARYFGLRRGQVVKIIRPSETAGRYITYRLVV</sequence>